<organism>
    <name type="scientific">Faxonius virilis</name>
    <name type="common">Virile crayfish</name>
    <name type="synonym">Orconectes virilis</name>
    <dbReference type="NCBI Taxonomy" id="2860243"/>
    <lineage>
        <taxon>Eukaryota</taxon>
        <taxon>Metazoa</taxon>
        <taxon>Ecdysozoa</taxon>
        <taxon>Arthropoda</taxon>
        <taxon>Crustacea</taxon>
        <taxon>Multicrustacea</taxon>
        <taxon>Malacostraca</taxon>
        <taxon>Eumalacostraca</taxon>
        <taxon>Eucarida</taxon>
        <taxon>Decapoda</taxon>
        <taxon>Pleocyemata</taxon>
        <taxon>Astacidea</taxon>
        <taxon>Astacoidea</taxon>
        <taxon>Cambaridae</taxon>
        <taxon>Faxonius</taxon>
    </lineage>
</organism>
<proteinExistence type="inferred from homology"/>
<comment type="function">
    <text evidence="3">Photoreceptor required for image-forming vision at low light intensity. Can use both retinal and 3-dehydroretinal as visual pigment. Light-induced isomerization of 11-cis to all-trans retinal triggers a conformational change that activates signaling via G-proteins. Signaling via GNAQ probably mediates the activation of phospholipase C.</text>
</comment>
<comment type="subunit">
    <text evidence="3">Homodimer. Interacts with GNAQ.</text>
</comment>
<comment type="subcellular location">
    <subcellularLocation>
        <location evidence="3">Cell projection</location>
        <location evidence="3">Rhabdomere membrane</location>
        <topology evidence="2">Multi-pass membrane protein</topology>
    </subcellularLocation>
</comment>
<comment type="PTM">
    <text evidence="1">Contains one covalently linked retinal chromophore.</text>
</comment>
<comment type="similarity">
    <text evidence="5">Belongs to the G-protein coupled receptor 1 family. Opsin subfamily.</text>
</comment>
<keyword id="KW-1003">Cell membrane</keyword>
<keyword id="KW-0966">Cell projection</keyword>
<keyword id="KW-0157">Chromophore</keyword>
<keyword id="KW-1015">Disulfide bond</keyword>
<keyword id="KW-0297">G-protein coupled receptor</keyword>
<keyword id="KW-0325">Glycoprotein</keyword>
<keyword id="KW-0472">Membrane</keyword>
<keyword id="KW-0597">Phosphoprotein</keyword>
<keyword id="KW-0600">Photoreceptor protein</keyword>
<keyword id="KW-0675">Receptor</keyword>
<keyword id="KW-0681">Retinal protein</keyword>
<keyword id="KW-0716">Sensory transduction</keyword>
<keyword id="KW-0807">Transducer</keyword>
<keyword id="KW-0812">Transmembrane</keyword>
<keyword id="KW-1133">Transmembrane helix</keyword>
<keyword id="KW-0844">Vision</keyword>
<protein>
    <recommendedName>
        <fullName>Rhodopsin</fullName>
    </recommendedName>
</protein>
<sequence length="301" mass="34614">LHMIHLHWYQYPPMNPMMYPLLLIFMLFTGILCLAGNFVTIWVFMNTKSLRTPANLLVVNLAMSDFLMMFTMFPPMMVTCYYHTWTLGPTFCQVYAFLGNLCGCASIWTMVFITFDRYNVIVKGVAGEPLSNKKAAMWILSVWVLSTAWCMAPFFGWNSYVPEGNLTGCGTDYLSEDILSRSYLYIYSTWVYFLPLTITIYCYVFIIKAVAAHEKGMRDQAKKMGIKSLRNEEAQKTSAECRLAKIAMTTVALWFIAWTPYLLINWVGMFARSYLSPVYTIWGYVFAKANAVYNPIVYAIS</sequence>
<name>OPSD_FAXVI</name>
<evidence type="ECO:0000250" key="1">
    <source>
        <dbReference type="UniProtKB" id="P02699"/>
    </source>
</evidence>
<evidence type="ECO:0000250" key="2">
    <source>
        <dbReference type="UniProtKB" id="P31356"/>
    </source>
</evidence>
<evidence type="ECO:0000250" key="3">
    <source>
        <dbReference type="UniProtKB" id="P35356"/>
    </source>
</evidence>
<evidence type="ECO:0000255" key="4"/>
<evidence type="ECO:0000255" key="5">
    <source>
        <dbReference type="PROSITE-ProRule" id="PRU00521"/>
    </source>
</evidence>
<evidence type="ECO:0000305" key="6"/>
<accession>O16019</accession>
<gene>
    <name type="primary">RHO</name>
</gene>
<dbReference type="EMBL" id="AF003545">
    <property type="protein sequence ID" value="AAB97667.1"/>
    <property type="molecule type" value="Genomic_DNA"/>
</dbReference>
<dbReference type="SMR" id="O16019"/>
<dbReference type="GlyCosmos" id="O16019">
    <property type="glycosylation" value="1 site, No reported glycans"/>
</dbReference>
<dbReference type="GO" id="GO:0042995">
    <property type="term" value="C:cell projection"/>
    <property type="evidence" value="ECO:0007669"/>
    <property type="project" value="UniProtKB-KW"/>
</dbReference>
<dbReference type="GO" id="GO:0005886">
    <property type="term" value="C:plasma membrane"/>
    <property type="evidence" value="ECO:0000250"/>
    <property type="project" value="UniProtKB"/>
</dbReference>
<dbReference type="GO" id="GO:0004930">
    <property type="term" value="F:G protein-coupled receptor activity"/>
    <property type="evidence" value="ECO:0007669"/>
    <property type="project" value="UniProtKB-KW"/>
</dbReference>
<dbReference type="GO" id="GO:0009881">
    <property type="term" value="F:photoreceptor activity"/>
    <property type="evidence" value="ECO:0007669"/>
    <property type="project" value="UniProtKB-KW"/>
</dbReference>
<dbReference type="GO" id="GO:0007602">
    <property type="term" value="P:phototransduction"/>
    <property type="evidence" value="ECO:0007669"/>
    <property type="project" value="UniProtKB-KW"/>
</dbReference>
<dbReference type="GO" id="GO:0007601">
    <property type="term" value="P:visual perception"/>
    <property type="evidence" value="ECO:0007669"/>
    <property type="project" value="UniProtKB-KW"/>
</dbReference>
<dbReference type="CDD" id="cd15079">
    <property type="entry name" value="7tmA_photoreceptors_insect"/>
    <property type="match status" value="1"/>
</dbReference>
<dbReference type="FunFam" id="1.20.1070.10:FF:000044">
    <property type="entry name" value="Opsin, ultraviolet-sensitive"/>
    <property type="match status" value="1"/>
</dbReference>
<dbReference type="Gene3D" id="1.20.1070.10">
    <property type="entry name" value="Rhodopsin 7-helix transmembrane proteins"/>
    <property type="match status" value="1"/>
</dbReference>
<dbReference type="InterPro" id="IPR050125">
    <property type="entry name" value="GPCR_opsins"/>
</dbReference>
<dbReference type="InterPro" id="IPR000276">
    <property type="entry name" value="GPCR_Rhodpsn"/>
</dbReference>
<dbReference type="InterPro" id="IPR017452">
    <property type="entry name" value="GPCR_Rhodpsn_7TM"/>
</dbReference>
<dbReference type="InterPro" id="IPR001760">
    <property type="entry name" value="Opsin"/>
</dbReference>
<dbReference type="InterPro" id="IPR001391">
    <property type="entry name" value="Opsin_lateye"/>
</dbReference>
<dbReference type="InterPro" id="IPR027430">
    <property type="entry name" value="Retinal_BS"/>
</dbReference>
<dbReference type="PANTHER" id="PTHR24240">
    <property type="entry name" value="OPSIN"/>
    <property type="match status" value="1"/>
</dbReference>
<dbReference type="Pfam" id="PF00001">
    <property type="entry name" value="7tm_1"/>
    <property type="match status" value="1"/>
</dbReference>
<dbReference type="PRINTS" id="PR00237">
    <property type="entry name" value="GPCRRHODOPSN"/>
</dbReference>
<dbReference type="PRINTS" id="PR00238">
    <property type="entry name" value="OPSIN"/>
</dbReference>
<dbReference type="PRINTS" id="PR00578">
    <property type="entry name" value="OPSINLTRLEYE"/>
</dbReference>
<dbReference type="SUPFAM" id="SSF81321">
    <property type="entry name" value="Family A G protein-coupled receptor-like"/>
    <property type="match status" value="1"/>
</dbReference>
<dbReference type="PROSITE" id="PS00237">
    <property type="entry name" value="G_PROTEIN_RECEP_F1_1"/>
    <property type="match status" value="1"/>
</dbReference>
<dbReference type="PROSITE" id="PS50262">
    <property type="entry name" value="G_PROTEIN_RECEP_F1_2"/>
    <property type="match status" value="1"/>
</dbReference>
<dbReference type="PROSITE" id="PS00238">
    <property type="entry name" value="OPSIN"/>
    <property type="match status" value="1"/>
</dbReference>
<feature type="chain" id="PRO_0000197742" description="Rhodopsin">
    <location>
        <begin position="1" status="less than"/>
        <end position="301" status="greater than"/>
    </location>
</feature>
<feature type="topological domain" description="Extracellular" evidence="6">
    <location>
        <begin position="1" status="less than"/>
        <end position="18"/>
    </location>
</feature>
<feature type="transmembrane region" description="Helical; Name=1" evidence="1">
    <location>
        <begin position="19"/>
        <end position="43"/>
    </location>
</feature>
<feature type="topological domain" description="Cytoplasmic" evidence="6">
    <location>
        <begin position="44"/>
        <end position="55"/>
    </location>
</feature>
<feature type="transmembrane region" description="Helical; Name=2" evidence="1">
    <location>
        <begin position="56"/>
        <end position="78"/>
    </location>
</feature>
<feature type="topological domain" description="Extracellular" evidence="6">
    <location>
        <begin position="79"/>
        <end position="92"/>
    </location>
</feature>
<feature type="transmembrane region" description="Helical; Name=3" evidence="1">
    <location>
        <begin position="93"/>
        <end position="115"/>
    </location>
</feature>
<feature type="topological domain" description="Cytoplasmic" evidence="6">
    <location>
        <begin position="116"/>
        <end position="134"/>
    </location>
</feature>
<feature type="transmembrane region" description="Helical; Name=4" evidence="1">
    <location>
        <begin position="135"/>
        <end position="155"/>
    </location>
</feature>
<feature type="topological domain" description="Extracellular" evidence="6">
    <location>
        <begin position="156"/>
        <end position="182"/>
    </location>
</feature>
<feature type="transmembrane region" description="Helical; Name=5" evidence="1">
    <location>
        <begin position="183"/>
        <end position="204"/>
    </location>
</feature>
<feature type="topological domain" description="Cytoplasmic" evidence="6">
    <location>
        <begin position="205"/>
        <end position="245"/>
    </location>
</feature>
<feature type="transmembrane region" description="Helical; Name=6" evidence="1">
    <location>
        <begin position="246"/>
        <end position="267"/>
    </location>
</feature>
<feature type="topological domain" description="Extracellular" evidence="6">
    <location>
        <begin position="268"/>
        <end position="278"/>
    </location>
</feature>
<feature type="transmembrane region" description="Helical; Name=7" evidence="1">
    <location>
        <begin position="279"/>
        <end position="300"/>
    </location>
</feature>
<feature type="short sequence motif" description="'Ionic lock' involved in activated form stabilization" evidence="1">
    <location>
        <begin position="116"/>
        <end position="118"/>
    </location>
</feature>
<feature type="modified residue" description="N6-(retinylidene)lysine" evidence="1">
    <location>
        <position position="288"/>
    </location>
</feature>
<feature type="glycosylation site" description="N-linked (GlcNAc...) asparagine" evidence="4">
    <location>
        <position position="165"/>
    </location>
</feature>
<feature type="disulfide bond" evidence="5">
    <location>
        <begin position="92"/>
        <end position="169"/>
    </location>
</feature>
<feature type="non-terminal residue">
    <location>
        <position position="1"/>
    </location>
</feature>
<feature type="non-terminal residue">
    <location>
        <position position="301"/>
    </location>
</feature>
<reference key="1">
    <citation type="journal article" date="1997" name="Nature">
        <title>Rhodopsin evolution in the dark.</title>
        <authorList>
            <person name="Crandall K.A."/>
            <person name="Hillis D.M."/>
        </authorList>
    </citation>
    <scope>NUCLEOTIDE SEQUENCE [GENOMIC DNA]</scope>
</reference>
<reference key="2">
    <citation type="journal article" date="1997" name="J. Mol. Evol.">
        <title>The molecular evolution of visual pigments of freshwater crayfishes (Decapoda: Cambaridae).</title>
        <authorList>
            <person name="Crandall K.A."/>
            <person name="Cronin T.W."/>
        </authorList>
    </citation>
    <scope>NUCLEOTIDE SEQUENCE [GENOMIC DNA]</scope>
</reference>